<reference key="1">
    <citation type="journal article" date="2005" name="Nat. Biotechnol.">
        <title>The complete genome sequence of the meat-borne lactic acid bacterium Lactobacillus sakei 23K.</title>
        <authorList>
            <person name="Chaillou S."/>
            <person name="Champomier-Verges M.-C."/>
            <person name="Cornet M."/>
            <person name="Crutz-Le Coq A.-M."/>
            <person name="Dudez A.-M."/>
            <person name="Martin V."/>
            <person name="Beaufils S."/>
            <person name="Darbon-Rongere E."/>
            <person name="Bossy R."/>
            <person name="Loux V."/>
            <person name="Zagorec M."/>
        </authorList>
    </citation>
    <scope>NUCLEOTIDE SEQUENCE [LARGE SCALE GENOMIC DNA]</scope>
    <source>
        <strain>23K</strain>
    </source>
</reference>
<dbReference type="EC" id="6.1.1.11" evidence="1"/>
<dbReference type="EMBL" id="CR936503">
    <property type="protein sequence ID" value="CAI56111.1"/>
    <property type="molecule type" value="Genomic_DNA"/>
</dbReference>
<dbReference type="RefSeq" id="WP_011375485.1">
    <property type="nucleotide sequence ID" value="NC_007576.1"/>
</dbReference>
<dbReference type="SMR" id="Q38UM4"/>
<dbReference type="STRING" id="314315.LCA_1803"/>
<dbReference type="KEGG" id="lsa:LCA_1803"/>
<dbReference type="eggNOG" id="COG0172">
    <property type="taxonomic scope" value="Bacteria"/>
</dbReference>
<dbReference type="HOGENOM" id="CLU_023797_1_1_9"/>
<dbReference type="OrthoDB" id="9804647at2"/>
<dbReference type="UniPathway" id="UPA00906">
    <property type="reaction ID" value="UER00895"/>
</dbReference>
<dbReference type="Proteomes" id="UP000002707">
    <property type="component" value="Chromosome"/>
</dbReference>
<dbReference type="GO" id="GO:0005737">
    <property type="term" value="C:cytoplasm"/>
    <property type="evidence" value="ECO:0007669"/>
    <property type="project" value="UniProtKB-SubCell"/>
</dbReference>
<dbReference type="GO" id="GO:0005524">
    <property type="term" value="F:ATP binding"/>
    <property type="evidence" value="ECO:0007669"/>
    <property type="project" value="UniProtKB-UniRule"/>
</dbReference>
<dbReference type="GO" id="GO:0140096">
    <property type="term" value="F:catalytic activity, acting on a protein"/>
    <property type="evidence" value="ECO:0007669"/>
    <property type="project" value="UniProtKB-ARBA"/>
</dbReference>
<dbReference type="GO" id="GO:0004828">
    <property type="term" value="F:serine-tRNA ligase activity"/>
    <property type="evidence" value="ECO:0007669"/>
    <property type="project" value="UniProtKB-UniRule"/>
</dbReference>
<dbReference type="GO" id="GO:0016740">
    <property type="term" value="F:transferase activity"/>
    <property type="evidence" value="ECO:0007669"/>
    <property type="project" value="UniProtKB-ARBA"/>
</dbReference>
<dbReference type="GO" id="GO:0016260">
    <property type="term" value="P:selenocysteine biosynthetic process"/>
    <property type="evidence" value="ECO:0007669"/>
    <property type="project" value="UniProtKB-UniRule"/>
</dbReference>
<dbReference type="GO" id="GO:0006434">
    <property type="term" value="P:seryl-tRNA aminoacylation"/>
    <property type="evidence" value="ECO:0007669"/>
    <property type="project" value="UniProtKB-UniRule"/>
</dbReference>
<dbReference type="CDD" id="cd00770">
    <property type="entry name" value="SerRS_core"/>
    <property type="match status" value="1"/>
</dbReference>
<dbReference type="Gene3D" id="3.30.930.10">
    <property type="entry name" value="Bira Bifunctional Protein, Domain 2"/>
    <property type="match status" value="1"/>
</dbReference>
<dbReference type="Gene3D" id="1.10.287.40">
    <property type="entry name" value="Serine-tRNA synthetase, tRNA binding domain"/>
    <property type="match status" value="1"/>
</dbReference>
<dbReference type="HAMAP" id="MF_00176">
    <property type="entry name" value="Ser_tRNA_synth_type1"/>
    <property type="match status" value="1"/>
</dbReference>
<dbReference type="InterPro" id="IPR002314">
    <property type="entry name" value="aa-tRNA-synt_IIb"/>
</dbReference>
<dbReference type="InterPro" id="IPR006195">
    <property type="entry name" value="aa-tRNA-synth_II"/>
</dbReference>
<dbReference type="InterPro" id="IPR045864">
    <property type="entry name" value="aa-tRNA-synth_II/BPL/LPL"/>
</dbReference>
<dbReference type="InterPro" id="IPR002317">
    <property type="entry name" value="Ser-tRNA-ligase_type_1"/>
</dbReference>
<dbReference type="InterPro" id="IPR015866">
    <property type="entry name" value="Ser-tRNA-synth_1_N"/>
</dbReference>
<dbReference type="InterPro" id="IPR042103">
    <property type="entry name" value="SerRS_1_N_sf"/>
</dbReference>
<dbReference type="InterPro" id="IPR033729">
    <property type="entry name" value="SerRS_core"/>
</dbReference>
<dbReference type="InterPro" id="IPR010978">
    <property type="entry name" value="tRNA-bd_arm"/>
</dbReference>
<dbReference type="NCBIfam" id="TIGR00414">
    <property type="entry name" value="serS"/>
    <property type="match status" value="1"/>
</dbReference>
<dbReference type="PANTHER" id="PTHR43697:SF1">
    <property type="entry name" value="SERINE--TRNA LIGASE"/>
    <property type="match status" value="1"/>
</dbReference>
<dbReference type="PANTHER" id="PTHR43697">
    <property type="entry name" value="SERYL-TRNA SYNTHETASE"/>
    <property type="match status" value="1"/>
</dbReference>
<dbReference type="Pfam" id="PF02403">
    <property type="entry name" value="Seryl_tRNA_N"/>
    <property type="match status" value="1"/>
</dbReference>
<dbReference type="Pfam" id="PF00587">
    <property type="entry name" value="tRNA-synt_2b"/>
    <property type="match status" value="1"/>
</dbReference>
<dbReference type="PIRSF" id="PIRSF001529">
    <property type="entry name" value="Ser-tRNA-synth_IIa"/>
    <property type="match status" value="1"/>
</dbReference>
<dbReference type="PRINTS" id="PR00981">
    <property type="entry name" value="TRNASYNTHSER"/>
</dbReference>
<dbReference type="SUPFAM" id="SSF55681">
    <property type="entry name" value="Class II aaRS and biotin synthetases"/>
    <property type="match status" value="1"/>
</dbReference>
<dbReference type="SUPFAM" id="SSF46589">
    <property type="entry name" value="tRNA-binding arm"/>
    <property type="match status" value="1"/>
</dbReference>
<dbReference type="PROSITE" id="PS50862">
    <property type="entry name" value="AA_TRNA_LIGASE_II"/>
    <property type="match status" value="1"/>
</dbReference>
<accession>Q38UM4</accession>
<gene>
    <name evidence="1" type="primary">serS</name>
    <name type="ordered locus">LCA_1803</name>
</gene>
<proteinExistence type="inferred from homology"/>
<sequence>MLDIRVIRENVQWAKDKLATRGIDAAEIDEVVALDEKRRALIVRTEELKKNRNAASEAIAVAKRNKEDATEQIAAMKNVGAEIKELDAQLAEVKEKVDYILVRLPNFPDDSAPVGLDESFSREERKWSTPREFDFEPLAHWDIGEKLGILDFERAAKVSGSRFVYYKGAGARLERAVYNFMLDQHAKEGYEEMITPYLVNGESMFGTGQFPKFTEDVYTMTNEGEPMTLIPTAEVPLTNFYRDEILDGAQLPIYFTALSPAFRSEAGSAGRDTRGLIRMHQFNKVEMVKFTKPEESFNELEKMTADAENILKALNLPYHVITLATGDASFTSAKTYDIEVWLPAQNTYREISSCSDCTDFQARRAQIRYRDEDGHVNLVHTLNGSGLAVGRTVAAILENYQNEDGTVTIPEPLVPYMGGMTKIG</sequence>
<organism>
    <name type="scientific">Latilactobacillus sakei subsp. sakei (strain 23K)</name>
    <name type="common">Lactobacillus sakei subsp. sakei</name>
    <dbReference type="NCBI Taxonomy" id="314315"/>
    <lineage>
        <taxon>Bacteria</taxon>
        <taxon>Bacillati</taxon>
        <taxon>Bacillota</taxon>
        <taxon>Bacilli</taxon>
        <taxon>Lactobacillales</taxon>
        <taxon>Lactobacillaceae</taxon>
        <taxon>Latilactobacillus</taxon>
    </lineage>
</organism>
<comment type="function">
    <text evidence="1">Catalyzes the attachment of serine to tRNA(Ser). Is also able to aminoacylate tRNA(Sec) with serine, to form the misacylated tRNA L-seryl-tRNA(Sec), which will be further converted into selenocysteinyl-tRNA(Sec).</text>
</comment>
<comment type="catalytic activity">
    <reaction evidence="1">
        <text>tRNA(Ser) + L-serine + ATP = L-seryl-tRNA(Ser) + AMP + diphosphate + H(+)</text>
        <dbReference type="Rhea" id="RHEA:12292"/>
        <dbReference type="Rhea" id="RHEA-COMP:9669"/>
        <dbReference type="Rhea" id="RHEA-COMP:9703"/>
        <dbReference type="ChEBI" id="CHEBI:15378"/>
        <dbReference type="ChEBI" id="CHEBI:30616"/>
        <dbReference type="ChEBI" id="CHEBI:33019"/>
        <dbReference type="ChEBI" id="CHEBI:33384"/>
        <dbReference type="ChEBI" id="CHEBI:78442"/>
        <dbReference type="ChEBI" id="CHEBI:78533"/>
        <dbReference type="ChEBI" id="CHEBI:456215"/>
        <dbReference type="EC" id="6.1.1.11"/>
    </reaction>
</comment>
<comment type="catalytic activity">
    <reaction evidence="1">
        <text>tRNA(Sec) + L-serine + ATP = L-seryl-tRNA(Sec) + AMP + diphosphate + H(+)</text>
        <dbReference type="Rhea" id="RHEA:42580"/>
        <dbReference type="Rhea" id="RHEA-COMP:9742"/>
        <dbReference type="Rhea" id="RHEA-COMP:10128"/>
        <dbReference type="ChEBI" id="CHEBI:15378"/>
        <dbReference type="ChEBI" id="CHEBI:30616"/>
        <dbReference type="ChEBI" id="CHEBI:33019"/>
        <dbReference type="ChEBI" id="CHEBI:33384"/>
        <dbReference type="ChEBI" id="CHEBI:78442"/>
        <dbReference type="ChEBI" id="CHEBI:78533"/>
        <dbReference type="ChEBI" id="CHEBI:456215"/>
        <dbReference type="EC" id="6.1.1.11"/>
    </reaction>
</comment>
<comment type="pathway">
    <text evidence="1">Aminoacyl-tRNA biosynthesis; selenocysteinyl-tRNA(Sec) biosynthesis; L-seryl-tRNA(Sec) from L-serine and tRNA(Sec): step 1/1.</text>
</comment>
<comment type="subunit">
    <text evidence="1">Homodimer. The tRNA molecule binds across the dimer.</text>
</comment>
<comment type="subcellular location">
    <subcellularLocation>
        <location evidence="1">Cytoplasm</location>
    </subcellularLocation>
</comment>
<comment type="domain">
    <text evidence="1">Consists of two distinct domains, a catalytic core and a N-terminal extension that is involved in tRNA binding.</text>
</comment>
<comment type="similarity">
    <text evidence="1">Belongs to the class-II aminoacyl-tRNA synthetase family. Type-1 seryl-tRNA synthetase subfamily.</text>
</comment>
<evidence type="ECO:0000255" key="1">
    <source>
        <dbReference type="HAMAP-Rule" id="MF_00176"/>
    </source>
</evidence>
<keyword id="KW-0030">Aminoacyl-tRNA synthetase</keyword>
<keyword id="KW-0067">ATP-binding</keyword>
<keyword id="KW-0963">Cytoplasm</keyword>
<keyword id="KW-0436">Ligase</keyword>
<keyword id="KW-0547">Nucleotide-binding</keyword>
<keyword id="KW-0648">Protein biosynthesis</keyword>
<keyword id="KW-1185">Reference proteome</keyword>
<feature type="chain" id="PRO_1000019714" description="Serine--tRNA ligase">
    <location>
        <begin position="1"/>
        <end position="424"/>
    </location>
</feature>
<feature type="binding site" evidence="1">
    <location>
        <begin position="232"/>
        <end position="234"/>
    </location>
    <ligand>
        <name>L-serine</name>
        <dbReference type="ChEBI" id="CHEBI:33384"/>
    </ligand>
</feature>
<feature type="binding site" evidence="1">
    <location>
        <begin position="263"/>
        <end position="265"/>
    </location>
    <ligand>
        <name>ATP</name>
        <dbReference type="ChEBI" id="CHEBI:30616"/>
    </ligand>
</feature>
<feature type="binding site" evidence="1">
    <location>
        <position position="286"/>
    </location>
    <ligand>
        <name>L-serine</name>
        <dbReference type="ChEBI" id="CHEBI:33384"/>
    </ligand>
</feature>
<feature type="binding site" evidence="1">
    <location>
        <begin position="350"/>
        <end position="353"/>
    </location>
    <ligand>
        <name>ATP</name>
        <dbReference type="ChEBI" id="CHEBI:30616"/>
    </ligand>
</feature>
<feature type="binding site" evidence="1">
    <location>
        <position position="385"/>
    </location>
    <ligand>
        <name>L-serine</name>
        <dbReference type="ChEBI" id="CHEBI:33384"/>
    </ligand>
</feature>
<protein>
    <recommendedName>
        <fullName evidence="1">Serine--tRNA ligase</fullName>
        <ecNumber evidence="1">6.1.1.11</ecNumber>
    </recommendedName>
    <alternativeName>
        <fullName evidence="1">Seryl-tRNA synthetase</fullName>
        <shortName evidence="1">SerRS</shortName>
    </alternativeName>
    <alternativeName>
        <fullName evidence="1">Seryl-tRNA(Ser/Sec) synthetase</fullName>
    </alternativeName>
</protein>
<name>SYS_LATSS</name>